<proteinExistence type="inferred from homology"/>
<feature type="chain" id="PRO_1000021042" description="Inner membrane-spanning protein YciB">
    <location>
        <begin position="1"/>
        <end position="195"/>
    </location>
</feature>
<feature type="transmembrane region" description="Helical" evidence="1">
    <location>
        <begin position="34"/>
        <end position="54"/>
    </location>
</feature>
<feature type="transmembrane region" description="Helical" evidence="1">
    <location>
        <begin position="65"/>
        <end position="85"/>
    </location>
</feature>
<feature type="transmembrane region" description="Helical" evidence="1">
    <location>
        <begin position="88"/>
        <end position="108"/>
    </location>
</feature>
<feature type="transmembrane region" description="Helical" evidence="1">
    <location>
        <begin position="131"/>
        <end position="151"/>
    </location>
</feature>
<feature type="transmembrane region" description="Helical" evidence="1">
    <location>
        <begin position="160"/>
        <end position="180"/>
    </location>
</feature>
<accession>Q02Q08</accession>
<reference key="1">
    <citation type="journal article" date="2006" name="Genome Biol.">
        <title>Genomic analysis reveals that Pseudomonas aeruginosa virulence is combinatorial.</title>
        <authorList>
            <person name="Lee D.G."/>
            <person name="Urbach J.M."/>
            <person name="Wu G."/>
            <person name="Liberati N.T."/>
            <person name="Feinbaum R.L."/>
            <person name="Miyata S."/>
            <person name="Diggins L.T."/>
            <person name="He J."/>
            <person name="Saucier M."/>
            <person name="Deziel E."/>
            <person name="Friedman L."/>
            <person name="Li L."/>
            <person name="Grills G."/>
            <person name="Montgomery K."/>
            <person name="Kucherlapati R."/>
            <person name="Rahme L.G."/>
            <person name="Ausubel F.M."/>
        </authorList>
    </citation>
    <scope>NUCLEOTIDE SEQUENCE [LARGE SCALE GENOMIC DNA]</scope>
    <source>
        <strain>UCBPP-PA14</strain>
    </source>
</reference>
<organism>
    <name type="scientific">Pseudomonas aeruginosa (strain UCBPP-PA14)</name>
    <dbReference type="NCBI Taxonomy" id="208963"/>
    <lineage>
        <taxon>Bacteria</taxon>
        <taxon>Pseudomonadati</taxon>
        <taxon>Pseudomonadota</taxon>
        <taxon>Gammaproteobacteria</taxon>
        <taxon>Pseudomonadales</taxon>
        <taxon>Pseudomonadaceae</taxon>
        <taxon>Pseudomonas</taxon>
    </lineage>
</organism>
<protein>
    <recommendedName>
        <fullName evidence="1">Inner membrane-spanning protein YciB</fullName>
    </recommendedName>
</protein>
<dbReference type="EMBL" id="CP000438">
    <property type="protein sequence ID" value="ABJ12427.1"/>
    <property type="molecule type" value="Genomic_DNA"/>
</dbReference>
<dbReference type="RefSeq" id="WP_003091488.1">
    <property type="nucleotide sequence ID" value="NZ_CP034244.1"/>
</dbReference>
<dbReference type="KEGG" id="pau:PA14_22800"/>
<dbReference type="PseudoCAP" id="PA14_22800"/>
<dbReference type="HOGENOM" id="CLU_089554_2_0_6"/>
<dbReference type="BioCyc" id="PAER208963:G1G74-1900-MONOMER"/>
<dbReference type="Proteomes" id="UP000000653">
    <property type="component" value="Chromosome"/>
</dbReference>
<dbReference type="GO" id="GO:0005886">
    <property type="term" value="C:plasma membrane"/>
    <property type="evidence" value="ECO:0007669"/>
    <property type="project" value="UniProtKB-SubCell"/>
</dbReference>
<dbReference type="HAMAP" id="MF_00189">
    <property type="entry name" value="YciB"/>
    <property type="match status" value="1"/>
</dbReference>
<dbReference type="InterPro" id="IPR006008">
    <property type="entry name" value="YciB"/>
</dbReference>
<dbReference type="NCBIfam" id="TIGR00997">
    <property type="entry name" value="ispZ"/>
    <property type="match status" value="1"/>
</dbReference>
<dbReference type="NCBIfam" id="NF001325">
    <property type="entry name" value="PRK00259.1-3"/>
    <property type="match status" value="1"/>
</dbReference>
<dbReference type="NCBIfam" id="NF001327">
    <property type="entry name" value="PRK00259.1-5"/>
    <property type="match status" value="1"/>
</dbReference>
<dbReference type="PANTHER" id="PTHR36917:SF1">
    <property type="entry name" value="INNER MEMBRANE-SPANNING PROTEIN YCIB"/>
    <property type="match status" value="1"/>
</dbReference>
<dbReference type="PANTHER" id="PTHR36917">
    <property type="entry name" value="INTRACELLULAR SEPTATION PROTEIN A-RELATED"/>
    <property type="match status" value="1"/>
</dbReference>
<dbReference type="Pfam" id="PF04279">
    <property type="entry name" value="IspA"/>
    <property type="match status" value="1"/>
</dbReference>
<sequence>MKQFIDFIPLILFFIVYKIDPQNVEFAGFNLSGIYGATATLILASVIVYGALWLKHRHLEKSQWFTLGACLVLGGLTLAFHEDTFLKWKAPLVNWLFALAFAGSHFIGDKPMIQRIMGHAIQLPQGLWVRLNIAWVVFFLVCGFANLYVVFTYPNFWVDFKVFGSLGMTLLFLIGQGLFLARHLHDADTGEKPKD</sequence>
<gene>
    <name evidence="1" type="primary">yciB</name>
    <name type="ordered locus">PA14_22800</name>
</gene>
<comment type="function">
    <text evidence="1">Plays a role in cell envelope biogenesis, maintenance of cell envelope integrity and membrane homeostasis.</text>
</comment>
<comment type="subcellular location">
    <subcellularLocation>
        <location evidence="1">Cell inner membrane</location>
        <topology evidence="1">Multi-pass membrane protein</topology>
    </subcellularLocation>
</comment>
<comment type="similarity">
    <text evidence="1">Belongs to the YciB family.</text>
</comment>
<keyword id="KW-0997">Cell inner membrane</keyword>
<keyword id="KW-1003">Cell membrane</keyword>
<keyword id="KW-0472">Membrane</keyword>
<keyword id="KW-0812">Transmembrane</keyword>
<keyword id="KW-1133">Transmembrane helix</keyword>
<evidence type="ECO:0000255" key="1">
    <source>
        <dbReference type="HAMAP-Rule" id="MF_00189"/>
    </source>
</evidence>
<name>YCIB_PSEAB</name>